<accession>Q8R5A3</accession>
<accession>O35329</accession>
<accession>Q8BRU0</accession>
<accession>Q99KV8</accession>
<protein>
    <recommendedName>
        <fullName>Amyloid beta A4 precursor protein-binding family B member 1-interacting protein</fullName>
    </recommendedName>
    <alternativeName>
        <fullName>APBB1-interacting protein 1</fullName>
    </alternativeName>
    <alternativeName>
        <fullName>Proline-rich EVH1 ligand 1</fullName>
        <shortName>PREL-1</shortName>
    </alternativeName>
    <alternativeName>
        <fullName>Proline-rich protein 48</fullName>
    </alternativeName>
</protein>
<dbReference type="EMBL" id="BC003991">
    <property type="protein sequence ID" value="AAH03991.1"/>
    <property type="molecule type" value="mRNA"/>
</dbReference>
<dbReference type="EMBL" id="BC023110">
    <property type="protein sequence ID" value="AAH23110.1"/>
    <property type="molecule type" value="mRNA"/>
</dbReference>
<dbReference type="EMBL" id="AK041552">
    <property type="protein sequence ID" value="BAC30983.1"/>
    <property type="molecule type" value="mRNA"/>
</dbReference>
<dbReference type="EMBL" id="AF020313">
    <property type="protein sequence ID" value="AAB94880.1"/>
    <property type="status" value="ALT_FRAME"/>
    <property type="molecule type" value="mRNA"/>
</dbReference>
<dbReference type="CCDS" id="CCDS38056.1"/>
<dbReference type="RefSeq" id="NP_062329.2">
    <property type="nucleotide sequence ID" value="NM_019456.2"/>
</dbReference>
<dbReference type="RefSeq" id="XP_006498249.1">
    <property type="nucleotide sequence ID" value="XM_006498186.4"/>
</dbReference>
<dbReference type="RefSeq" id="XP_011237441.1">
    <property type="nucleotide sequence ID" value="XM_011239139.2"/>
</dbReference>
<dbReference type="PDB" id="3TCA">
    <property type="method" value="X-ray"/>
    <property type="resolution" value="2.35 A"/>
    <property type="chains" value="A/B=150-437"/>
</dbReference>
<dbReference type="PDB" id="4KVG">
    <property type="method" value="X-ray"/>
    <property type="resolution" value="1.65 A"/>
    <property type="chains" value="B/D=179-437"/>
</dbReference>
<dbReference type="PDB" id="4W8P">
    <property type="method" value="X-ray"/>
    <property type="resolution" value="1.50 A"/>
    <property type="chains" value="B=5-25"/>
</dbReference>
<dbReference type="PDB" id="6O6H">
    <property type="method" value="X-ray"/>
    <property type="resolution" value="2.50 A"/>
    <property type="chains" value="A=150-437"/>
</dbReference>
<dbReference type="PDB" id="6OLU">
    <property type="method" value="X-ray"/>
    <property type="resolution" value="1.90 A"/>
    <property type="chains" value="A=179-437"/>
</dbReference>
<dbReference type="PDB" id="7V1A">
    <property type="method" value="X-ray"/>
    <property type="resolution" value="1.84 A"/>
    <property type="chains" value="B=7-25"/>
</dbReference>
<dbReference type="PDBsum" id="3TCA"/>
<dbReference type="PDBsum" id="4KVG"/>
<dbReference type="PDBsum" id="4W8P"/>
<dbReference type="PDBsum" id="6O6H"/>
<dbReference type="PDBsum" id="6OLU"/>
<dbReference type="PDBsum" id="7V1A"/>
<dbReference type="BMRB" id="Q8R5A3"/>
<dbReference type="SMR" id="Q8R5A3"/>
<dbReference type="BioGRID" id="207671">
    <property type="interactions" value="6"/>
</dbReference>
<dbReference type="DIP" id="DIP-29358N"/>
<dbReference type="FunCoup" id="Q8R5A3">
    <property type="interactions" value="1103"/>
</dbReference>
<dbReference type="IntAct" id="Q8R5A3">
    <property type="interactions" value="2"/>
</dbReference>
<dbReference type="MINT" id="Q8R5A3"/>
<dbReference type="STRING" id="10090.ENSMUSP00000014290"/>
<dbReference type="iPTMnet" id="Q8R5A3"/>
<dbReference type="PhosphoSitePlus" id="Q8R5A3"/>
<dbReference type="SwissPalm" id="Q8R5A3"/>
<dbReference type="jPOST" id="Q8R5A3"/>
<dbReference type="PaxDb" id="10090-ENSMUSP00000014290"/>
<dbReference type="ProteomicsDB" id="296433"/>
<dbReference type="Pumba" id="Q8R5A3"/>
<dbReference type="Antibodypedia" id="38122">
    <property type="antibodies" value="248 antibodies from 29 providers"/>
</dbReference>
<dbReference type="DNASU" id="54519"/>
<dbReference type="Ensembl" id="ENSMUST00000014290.15">
    <property type="protein sequence ID" value="ENSMUSP00000014290.9"/>
    <property type="gene ID" value="ENSMUSG00000026786.15"/>
</dbReference>
<dbReference type="GeneID" id="54519"/>
<dbReference type="KEGG" id="mmu:54519"/>
<dbReference type="UCSC" id="uc008inn.2">
    <property type="organism name" value="mouse"/>
</dbReference>
<dbReference type="AGR" id="MGI:1861354"/>
<dbReference type="CTD" id="54518"/>
<dbReference type="MGI" id="MGI:1861354">
    <property type="gene designation" value="Apbb1ip"/>
</dbReference>
<dbReference type="VEuPathDB" id="HostDB:ENSMUSG00000026786"/>
<dbReference type="eggNOG" id="KOG3751">
    <property type="taxonomic scope" value="Eukaryota"/>
</dbReference>
<dbReference type="GeneTree" id="ENSGT00940000156105"/>
<dbReference type="HOGENOM" id="CLU_023207_2_0_1"/>
<dbReference type="InParanoid" id="Q8R5A3"/>
<dbReference type="OMA" id="CCDDQAT"/>
<dbReference type="OrthoDB" id="6235964at2759"/>
<dbReference type="PhylomeDB" id="Q8R5A3"/>
<dbReference type="TreeFam" id="TF317511"/>
<dbReference type="Reactome" id="R-MMU-354192">
    <property type="pathway name" value="Integrin signaling"/>
</dbReference>
<dbReference type="Reactome" id="R-MMU-354194">
    <property type="pathway name" value="GRB2:SOS provides linkage to MAPK signaling for Integrins"/>
</dbReference>
<dbReference type="Reactome" id="R-MMU-372708">
    <property type="pathway name" value="p130Cas linkage to MAPK signaling for integrins"/>
</dbReference>
<dbReference type="Reactome" id="R-MMU-5674135">
    <property type="pathway name" value="MAP2K and MAPK activation"/>
</dbReference>
<dbReference type="BioGRID-ORCS" id="54519">
    <property type="hits" value="4 hits in 77 CRISPR screens"/>
</dbReference>
<dbReference type="ChiTaRS" id="Apbb1ip">
    <property type="organism name" value="mouse"/>
</dbReference>
<dbReference type="EvolutionaryTrace" id="Q8R5A3"/>
<dbReference type="PRO" id="PR:Q8R5A3"/>
<dbReference type="Proteomes" id="UP000000589">
    <property type="component" value="Chromosome 2"/>
</dbReference>
<dbReference type="RNAct" id="Q8R5A3">
    <property type="molecule type" value="protein"/>
</dbReference>
<dbReference type="Bgee" id="ENSMUSG00000026786">
    <property type="expression patterns" value="Expressed in granulocyte and 113 other cell types or tissues"/>
</dbReference>
<dbReference type="ExpressionAtlas" id="Q8R5A3">
    <property type="expression patterns" value="baseline and differential"/>
</dbReference>
<dbReference type="GO" id="GO:0005856">
    <property type="term" value="C:cytoskeleton"/>
    <property type="evidence" value="ECO:0007669"/>
    <property type="project" value="UniProtKB-SubCell"/>
</dbReference>
<dbReference type="GO" id="GO:0005829">
    <property type="term" value="C:cytosol"/>
    <property type="evidence" value="ECO:0000314"/>
    <property type="project" value="MGI"/>
</dbReference>
<dbReference type="GO" id="GO:0005925">
    <property type="term" value="C:focal adhesion"/>
    <property type="evidence" value="ECO:0007669"/>
    <property type="project" value="UniProtKB-SubCell"/>
</dbReference>
<dbReference type="GO" id="GO:0030027">
    <property type="term" value="C:lamellipodium"/>
    <property type="evidence" value="ECO:0007669"/>
    <property type="project" value="UniProtKB-SubCell"/>
</dbReference>
<dbReference type="GO" id="GO:0005886">
    <property type="term" value="C:plasma membrane"/>
    <property type="evidence" value="ECO:0000314"/>
    <property type="project" value="MGI"/>
</dbReference>
<dbReference type="GO" id="GO:0042101">
    <property type="term" value="C:T cell receptor complex"/>
    <property type="evidence" value="ECO:0000314"/>
    <property type="project" value="MGI"/>
</dbReference>
<dbReference type="GO" id="GO:0045785">
    <property type="term" value="P:positive regulation of cell adhesion"/>
    <property type="evidence" value="ECO:0000314"/>
    <property type="project" value="MGI"/>
</dbReference>
<dbReference type="GO" id="GO:0007165">
    <property type="term" value="P:signal transduction"/>
    <property type="evidence" value="ECO:0007669"/>
    <property type="project" value="InterPro"/>
</dbReference>
<dbReference type="GO" id="GO:0002291">
    <property type="term" value="P:T cell activation via T cell receptor contact with antigen bound to MHC molecule on antigen presenting cell"/>
    <property type="evidence" value="ECO:0000314"/>
    <property type="project" value="MGI"/>
</dbReference>
<dbReference type="CDD" id="cd01259">
    <property type="entry name" value="PH_APBB1IP"/>
    <property type="match status" value="1"/>
</dbReference>
<dbReference type="CDD" id="cd16137">
    <property type="entry name" value="RA_MRL_RIAM"/>
    <property type="match status" value="1"/>
</dbReference>
<dbReference type="FunFam" id="3.10.20.90:FF:000124">
    <property type="entry name" value="amyloid beta A4 precursor protein-binding family B member 1-interacting protein-like"/>
    <property type="match status" value="1"/>
</dbReference>
<dbReference type="FunFam" id="2.30.29.30:FF:000048">
    <property type="entry name" value="Ras association (RalGDS/AF-6) and pleckstrin homology domains 1"/>
    <property type="match status" value="1"/>
</dbReference>
<dbReference type="Gene3D" id="3.10.20.90">
    <property type="entry name" value="Phosphatidylinositol 3-kinase Catalytic Subunit, Chain A, domain 1"/>
    <property type="match status" value="1"/>
</dbReference>
<dbReference type="Gene3D" id="2.30.29.30">
    <property type="entry name" value="Pleckstrin-homology domain (PH domain)/Phosphotyrosine-binding domain (PTB)"/>
    <property type="match status" value="1"/>
</dbReference>
<dbReference type="InterPro" id="IPR039664">
    <property type="entry name" value="GRB/APBB1IP"/>
</dbReference>
<dbReference type="InterPro" id="IPR011993">
    <property type="entry name" value="PH-like_dom_sf"/>
</dbReference>
<dbReference type="InterPro" id="IPR039665">
    <property type="entry name" value="PH_APBB1IP"/>
</dbReference>
<dbReference type="InterPro" id="IPR001849">
    <property type="entry name" value="PH_domain"/>
</dbReference>
<dbReference type="InterPro" id="IPR000159">
    <property type="entry name" value="RA_dom"/>
</dbReference>
<dbReference type="InterPro" id="IPR029071">
    <property type="entry name" value="Ubiquitin-like_domsf"/>
</dbReference>
<dbReference type="PANTHER" id="PTHR11243:SF14">
    <property type="entry name" value="AMYLOID BETA A4 PRECURSOR PROTEIN-BINDING FAMILY B MEMBER 1-INTERACTING PROTEIN"/>
    <property type="match status" value="1"/>
</dbReference>
<dbReference type="PANTHER" id="PTHR11243">
    <property type="entry name" value="GROWTH FACTOR RECEPTOR-BOUND PROTEIN"/>
    <property type="match status" value="1"/>
</dbReference>
<dbReference type="Pfam" id="PF00169">
    <property type="entry name" value="PH"/>
    <property type="match status" value="1"/>
</dbReference>
<dbReference type="Pfam" id="PF21989">
    <property type="entry name" value="RA_2"/>
    <property type="match status" value="1"/>
</dbReference>
<dbReference type="SMART" id="SM00233">
    <property type="entry name" value="PH"/>
    <property type="match status" value="1"/>
</dbReference>
<dbReference type="SMART" id="SM00314">
    <property type="entry name" value="RA"/>
    <property type="match status" value="1"/>
</dbReference>
<dbReference type="SUPFAM" id="SSF50729">
    <property type="entry name" value="PH domain-like"/>
    <property type="match status" value="1"/>
</dbReference>
<dbReference type="SUPFAM" id="SSF54236">
    <property type="entry name" value="Ubiquitin-like"/>
    <property type="match status" value="1"/>
</dbReference>
<dbReference type="PROSITE" id="PS50003">
    <property type="entry name" value="PH_DOMAIN"/>
    <property type="match status" value="1"/>
</dbReference>
<dbReference type="PROSITE" id="PS50200">
    <property type="entry name" value="RA"/>
    <property type="match status" value="1"/>
</dbReference>
<reference key="1">
    <citation type="journal article" date="2005" name="FEBS Lett.">
        <title>PREL1 provides a link from Ras signalling to the actin cytoskeleton via Ena/VASP proteins.</title>
        <authorList>
            <person name="Jenzora A."/>
            <person name="Behrendt B."/>
            <person name="Small J.V."/>
            <person name="Wehland J."/>
            <person name="Stradal T.E."/>
        </authorList>
    </citation>
    <scope>NUCLEOTIDE SEQUENCE [MRNA]</scope>
    <scope>SUBCELLULAR LOCATION</scope>
    <scope>TISSUE SPECIFICITY</scope>
    <scope>INTERACTION WITH ENAH; VASP AND RAP1A</scope>
    <source>
        <tissue>Cervix carcinoma</tissue>
    </source>
</reference>
<reference key="2">
    <citation type="journal article" date="2004" name="Genome Res.">
        <title>The status, quality, and expansion of the NIH full-length cDNA project: the Mammalian Gene Collection (MGC).</title>
        <authorList>
            <consortium name="The MGC Project Team"/>
        </authorList>
    </citation>
    <scope>NUCLEOTIDE SEQUENCE [LARGE SCALE MRNA]</scope>
    <source>
        <strain>Czech II</strain>
        <strain>FVB/N</strain>
        <tissue>Mammary tumor</tissue>
    </source>
</reference>
<reference key="3">
    <citation type="journal article" date="2005" name="Science">
        <title>The transcriptional landscape of the mammalian genome.</title>
        <authorList>
            <person name="Carninci P."/>
            <person name="Kasukawa T."/>
            <person name="Katayama S."/>
            <person name="Gough J."/>
            <person name="Frith M.C."/>
            <person name="Maeda N."/>
            <person name="Oyama R."/>
            <person name="Ravasi T."/>
            <person name="Lenhard B."/>
            <person name="Wells C."/>
            <person name="Kodzius R."/>
            <person name="Shimokawa K."/>
            <person name="Bajic V.B."/>
            <person name="Brenner S.E."/>
            <person name="Batalov S."/>
            <person name="Forrest A.R."/>
            <person name="Zavolan M."/>
            <person name="Davis M.J."/>
            <person name="Wilming L.G."/>
            <person name="Aidinis V."/>
            <person name="Allen J.E."/>
            <person name="Ambesi-Impiombato A."/>
            <person name="Apweiler R."/>
            <person name="Aturaliya R.N."/>
            <person name="Bailey T.L."/>
            <person name="Bansal M."/>
            <person name="Baxter L."/>
            <person name="Beisel K.W."/>
            <person name="Bersano T."/>
            <person name="Bono H."/>
            <person name="Chalk A.M."/>
            <person name="Chiu K.P."/>
            <person name="Choudhary V."/>
            <person name="Christoffels A."/>
            <person name="Clutterbuck D.R."/>
            <person name="Crowe M.L."/>
            <person name="Dalla E."/>
            <person name="Dalrymple B.P."/>
            <person name="de Bono B."/>
            <person name="Della Gatta G."/>
            <person name="di Bernardo D."/>
            <person name="Down T."/>
            <person name="Engstrom P."/>
            <person name="Fagiolini M."/>
            <person name="Faulkner G."/>
            <person name="Fletcher C.F."/>
            <person name="Fukushima T."/>
            <person name="Furuno M."/>
            <person name="Futaki S."/>
            <person name="Gariboldi M."/>
            <person name="Georgii-Hemming P."/>
            <person name="Gingeras T.R."/>
            <person name="Gojobori T."/>
            <person name="Green R.E."/>
            <person name="Gustincich S."/>
            <person name="Harbers M."/>
            <person name="Hayashi Y."/>
            <person name="Hensch T.K."/>
            <person name="Hirokawa N."/>
            <person name="Hill D."/>
            <person name="Huminiecki L."/>
            <person name="Iacono M."/>
            <person name="Ikeo K."/>
            <person name="Iwama A."/>
            <person name="Ishikawa T."/>
            <person name="Jakt M."/>
            <person name="Kanapin A."/>
            <person name="Katoh M."/>
            <person name="Kawasawa Y."/>
            <person name="Kelso J."/>
            <person name="Kitamura H."/>
            <person name="Kitano H."/>
            <person name="Kollias G."/>
            <person name="Krishnan S.P."/>
            <person name="Kruger A."/>
            <person name="Kummerfeld S.K."/>
            <person name="Kurochkin I.V."/>
            <person name="Lareau L.F."/>
            <person name="Lazarevic D."/>
            <person name="Lipovich L."/>
            <person name="Liu J."/>
            <person name="Liuni S."/>
            <person name="McWilliam S."/>
            <person name="Madan Babu M."/>
            <person name="Madera M."/>
            <person name="Marchionni L."/>
            <person name="Matsuda H."/>
            <person name="Matsuzawa S."/>
            <person name="Miki H."/>
            <person name="Mignone F."/>
            <person name="Miyake S."/>
            <person name="Morris K."/>
            <person name="Mottagui-Tabar S."/>
            <person name="Mulder N."/>
            <person name="Nakano N."/>
            <person name="Nakauchi H."/>
            <person name="Ng P."/>
            <person name="Nilsson R."/>
            <person name="Nishiguchi S."/>
            <person name="Nishikawa S."/>
            <person name="Nori F."/>
            <person name="Ohara O."/>
            <person name="Okazaki Y."/>
            <person name="Orlando V."/>
            <person name="Pang K.C."/>
            <person name="Pavan W.J."/>
            <person name="Pavesi G."/>
            <person name="Pesole G."/>
            <person name="Petrovsky N."/>
            <person name="Piazza S."/>
            <person name="Reed J."/>
            <person name="Reid J.F."/>
            <person name="Ring B.Z."/>
            <person name="Ringwald M."/>
            <person name="Rost B."/>
            <person name="Ruan Y."/>
            <person name="Salzberg S.L."/>
            <person name="Sandelin A."/>
            <person name="Schneider C."/>
            <person name="Schoenbach C."/>
            <person name="Sekiguchi K."/>
            <person name="Semple C.A."/>
            <person name="Seno S."/>
            <person name="Sessa L."/>
            <person name="Sheng Y."/>
            <person name="Shibata Y."/>
            <person name="Shimada H."/>
            <person name="Shimada K."/>
            <person name="Silva D."/>
            <person name="Sinclair B."/>
            <person name="Sperling S."/>
            <person name="Stupka E."/>
            <person name="Sugiura K."/>
            <person name="Sultana R."/>
            <person name="Takenaka Y."/>
            <person name="Taki K."/>
            <person name="Tammoja K."/>
            <person name="Tan S.L."/>
            <person name="Tang S."/>
            <person name="Taylor M.S."/>
            <person name="Tegner J."/>
            <person name="Teichmann S.A."/>
            <person name="Ueda H.R."/>
            <person name="van Nimwegen E."/>
            <person name="Verardo R."/>
            <person name="Wei C.L."/>
            <person name="Yagi K."/>
            <person name="Yamanishi H."/>
            <person name="Zabarovsky E."/>
            <person name="Zhu S."/>
            <person name="Zimmer A."/>
            <person name="Hide W."/>
            <person name="Bult C."/>
            <person name="Grimmond S.M."/>
            <person name="Teasdale R.D."/>
            <person name="Liu E.T."/>
            <person name="Brusic V."/>
            <person name="Quackenbush J."/>
            <person name="Wahlestedt C."/>
            <person name="Mattick J.S."/>
            <person name="Hume D.A."/>
            <person name="Kai C."/>
            <person name="Sasaki D."/>
            <person name="Tomaru Y."/>
            <person name="Fukuda S."/>
            <person name="Kanamori-Katayama M."/>
            <person name="Suzuki M."/>
            <person name="Aoki J."/>
            <person name="Arakawa T."/>
            <person name="Iida J."/>
            <person name="Imamura K."/>
            <person name="Itoh M."/>
            <person name="Kato T."/>
            <person name="Kawaji H."/>
            <person name="Kawagashira N."/>
            <person name="Kawashima T."/>
            <person name="Kojima M."/>
            <person name="Kondo S."/>
            <person name="Konno H."/>
            <person name="Nakano K."/>
            <person name="Ninomiya N."/>
            <person name="Nishio T."/>
            <person name="Okada M."/>
            <person name="Plessy C."/>
            <person name="Shibata K."/>
            <person name="Shiraki T."/>
            <person name="Suzuki S."/>
            <person name="Tagami M."/>
            <person name="Waki K."/>
            <person name="Watahiki A."/>
            <person name="Okamura-Oho Y."/>
            <person name="Suzuki H."/>
            <person name="Kawai J."/>
            <person name="Hayashizaki Y."/>
        </authorList>
    </citation>
    <scope>NUCLEOTIDE SEQUENCE [LARGE SCALE MRNA] OF 1-282</scope>
    <source>
        <strain>C57BL/6J</strain>
        <tissue>Thymus</tissue>
    </source>
</reference>
<reference key="4">
    <citation type="journal article" date="1997" name="J. Biol. Chem.">
        <title>The WW domain of neural protein FE65 interacts with proline-rich motifs in Mena, the mammalian homolog of Drosophila enabled.</title>
        <authorList>
            <person name="Ermekova K.S."/>
            <person name="Zambrano N."/>
            <person name="Linn H."/>
            <person name="Minopoli G."/>
            <person name="Gertler F."/>
            <person name="Russo T."/>
            <person name="Sudol M."/>
        </authorList>
    </citation>
    <scope>NUCLEOTIDE SEQUENCE [MRNA] OF 66-670</scope>
    <scope>TISSUE SPECIFICITY</scope>
    <scope>INTERACTION WITH APBB1</scope>
</reference>
<reference key="5">
    <citation type="journal article" date="2009" name="Immunity">
        <title>The phagosomal proteome in interferon-gamma-activated macrophages.</title>
        <authorList>
            <person name="Trost M."/>
            <person name="English L."/>
            <person name="Lemieux S."/>
            <person name="Courcelles M."/>
            <person name="Desjardins M."/>
            <person name="Thibault P."/>
        </authorList>
    </citation>
    <scope>PHOSPHORYLATION [LARGE SCALE ANALYSIS] AT SER-55</scope>
    <scope>IDENTIFICATION BY MASS SPECTROMETRY [LARGE SCALE ANALYSIS]</scope>
</reference>
<reference key="6">
    <citation type="journal article" date="2010" name="Cell">
        <title>A tissue-specific atlas of mouse protein phosphorylation and expression.</title>
        <authorList>
            <person name="Huttlin E.L."/>
            <person name="Jedrychowski M.P."/>
            <person name="Elias J.E."/>
            <person name="Goswami T."/>
            <person name="Rad R."/>
            <person name="Beausoleil S.A."/>
            <person name="Villen J."/>
            <person name="Haas W."/>
            <person name="Sowa M.E."/>
            <person name="Gygi S.P."/>
        </authorList>
    </citation>
    <scope>PHOSPHORYLATION [LARGE SCALE ANALYSIS] AT SER-532; THR-534 AND SER-537</scope>
    <scope>IDENTIFICATION BY MASS SPECTROMETRY [LARGE SCALE ANALYSIS]</scope>
    <source>
        <tissue>Brain</tissue>
        <tissue>Heart</tissue>
        <tissue>Lung</tissue>
        <tissue>Spleen</tissue>
    </source>
</reference>
<keyword id="KW-0002">3D-structure</keyword>
<keyword id="KW-0965">Cell junction</keyword>
<keyword id="KW-1003">Cell membrane</keyword>
<keyword id="KW-0966">Cell projection</keyword>
<keyword id="KW-0963">Cytoplasm</keyword>
<keyword id="KW-0206">Cytoskeleton</keyword>
<keyword id="KW-0472">Membrane</keyword>
<keyword id="KW-0597">Phosphoprotein</keyword>
<keyword id="KW-1185">Reference proteome</keyword>
<gene>
    <name type="primary">Apbb1ip</name>
    <name type="synonym">Prel1</name>
</gene>
<proteinExistence type="evidence at protein level"/>
<evidence type="ECO:0000250" key="1"/>
<evidence type="ECO:0000255" key="2">
    <source>
        <dbReference type="PROSITE-ProRule" id="PRU00145"/>
    </source>
</evidence>
<evidence type="ECO:0000255" key="3">
    <source>
        <dbReference type="PROSITE-ProRule" id="PRU00166"/>
    </source>
</evidence>
<evidence type="ECO:0000256" key="4">
    <source>
        <dbReference type="SAM" id="MobiDB-lite"/>
    </source>
</evidence>
<evidence type="ECO:0000269" key="5">
    <source>
    </source>
</evidence>
<evidence type="ECO:0000269" key="6">
    <source>
    </source>
</evidence>
<evidence type="ECO:0000305" key="7"/>
<evidence type="ECO:0007744" key="8">
    <source>
    </source>
</evidence>
<evidence type="ECO:0007744" key="9">
    <source>
    </source>
</evidence>
<evidence type="ECO:0007829" key="10">
    <source>
        <dbReference type="PDB" id="4KVG"/>
    </source>
</evidence>
<evidence type="ECO:0007829" key="11">
    <source>
        <dbReference type="PDB" id="4W8P"/>
    </source>
</evidence>
<evidence type="ECO:0007829" key="12">
    <source>
        <dbReference type="PDB" id="6OLU"/>
    </source>
</evidence>
<sequence length="670" mass="74319">MGESNEDIDQMFSTLLGEMDLLTQSLGVDTLPPPDPNPPREEFNYTVGFKDLNESLNALEDQDLDALMADLVADISEAEQRTIQAQKESSQNQDRFALLRASDGQGTASGGYGASAAAIDVSHHEEALPPPPVEPMLDLLPPPPPPPPPELLSKEEEEAKAKADKIKLALEKLKEAKVKKLVVKVHMDDSSTKSLMVDERQLARDVLDNLFEKTHCDCNVDWCLYEIYPELQIERVFEDHENVVEVLSDWTRDTENKVLFLEKEERYAVFKNPQNFYLDNKGKKENKETNEKMNAKNKEYLLEESFCGTSIIVPELEGALYLKEDGKKSWKRRYFLLRASGIYYVPKGKTKTSRDLACFIQFENVNIYYGIQCKMKYKAPTDHCFVLKHPQIQKESQYIKYLCCDDARTLSQWVMGIRIAKYGKTLYDNYQRAVARAGLASRWTNLGTVGTPMPAQPSTVSSGLKTGTSQPNGQMPQAIPSAGPPLQEAQTQIETTKDEKQGLGNHSPGATRENHRPKSSLPPPPPPVRRSSDTCGSPALPSKVKGPGTCTFPHPPENFLPPPPPPPPEEDNSGLLPPPPPPPYLEEPPDFVPPPPPPAAVEDSALPPPPPPPPCLSQEITKSSPLPPKKPLVPPKRQENQGLPGAPGNSEQDFMSDLMKALQKKRGNIP</sequence>
<feature type="chain" id="PRO_0000181348" description="Amyloid beta A4 precursor protein-binding family B member 1-interacting protein">
    <location>
        <begin position="1"/>
        <end position="670"/>
    </location>
</feature>
<feature type="domain" description="Ras-associating" evidence="3">
    <location>
        <begin position="179"/>
        <end position="266"/>
    </location>
</feature>
<feature type="domain" description="PH" evidence="2">
    <location>
        <begin position="313"/>
        <end position="422"/>
    </location>
</feature>
<feature type="region of interest" description="Disordered" evidence="4">
    <location>
        <begin position="449"/>
        <end position="653"/>
    </location>
</feature>
<feature type="compositionally biased region" description="Polar residues" evidence="4">
    <location>
        <begin position="456"/>
        <end position="475"/>
    </location>
</feature>
<feature type="compositionally biased region" description="Pro residues" evidence="4">
    <location>
        <begin position="553"/>
        <end position="567"/>
    </location>
</feature>
<feature type="compositionally biased region" description="Pro residues" evidence="4">
    <location>
        <begin position="576"/>
        <end position="599"/>
    </location>
</feature>
<feature type="compositionally biased region" description="Pro residues" evidence="4">
    <location>
        <begin position="606"/>
        <end position="615"/>
    </location>
</feature>
<feature type="compositionally biased region" description="Pro residues" evidence="4">
    <location>
        <begin position="625"/>
        <end position="634"/>
    </location>
</feature>
<feature type="modified residue" description="Phosphoserine" evidence="8">
    <location>
        <position position="55"/>
    </location>
</feature>
<feature type="modified residue" description="Phosphoserine" evidence="9">
    <location>
        <position position="532"/>
    </location>
</feature>
<feature type="modified residue" description="Phosphothreonine" evidence="9">
    <location>
        <position position="534"/>
    </location>
</feature>
<feature type="modified residue" description="Phosphoserine" evidence="9">
    <location>
        <position position="537"/>
    </location>
</feature>
<feature type="sequence conflict" description="In Ref. 4; AAB94880." evidence="7" ref="4">
    <original>ALMA</original>
    <variation>EFKP</variation>
    <location>
        <begin position="66"/>
        <end position="69"/>
    </location>
</feature>
<feature type="sequence conflict" description="In Ref. 2; AAH03991." evidence="7" ref="2">
    <original>A</original>
    <variation>D</variation>
    <location>
        <position position="127"/>
    </location>
</feature>
<feature type="sequence conflict" description="In Ref. 1, 2 and 4." evidence="7" ref="1 2 4">
    <location>
        <position position="141"/>
    </location>
</feature>
<feature type="sequence conflict" description="In Ref. 1, 2; AAH23110 and 4." evidence="7" ref="1 2 4">
    <location>
        <position position="142"/>
    </location>
</feature>
<feature type="sequence conflict" description="In Ref. 2; AAH03991." evidence="7" ref="2">
    <original>S</original>
    <variation>P</variation>
    <location>
        <position position="461"/>
    </location>
</feature>
<feature type="sequence conflict" description="In Ref. 2; AAH03991." evidence="7" ref="2">
    <original>T</original>
    <variation>S</variation>
    <location>
        <position position="549"/>
    </location>
</feature>
<feature type="helix" evidence="11">
    <location>
        <begin position="6"/>
        <end position="11"/>
    </location>
</feature>
<feature type="helix" evidence="11">
    <location>
        <begin position="13"/>
        <end position="22"/>
    </location>
</feature>
<feature type="strand" evidence="10">
    <location>
        <begin position="180"/>
        <end position="187"/>
    </location>
</feature>
<feature type="strand" evidence="10">
    <location>
        <begin position="192"/>
        <end position="198"/>
    </location>
</feature>
<feature type="helix" evidence="10">
    <location>
        <begin position="203"/>
        <end position="214"/>
    </location>
</feature>
<feature type="strand" evidence="10">
    <location>
        <begin position="222"/>
        <end position="228"/>
    </location>
</feature>
<feature type="turn" evidence="10">
    <location>
        <begin position="229"/>
        <end position="232"/>
    </location>
</feature>
<feature type="strand" evidence="10">
    <location>
        <begin position="233"/>
        <end position="236"/>
    </location>
</feature>
<feature type="helix" evidence="10">
    <location>
        <begin position="243"/>
        <end position="247"/>
    </location>
</feature>
<feature type="strand" evidence="10">
    <location>
        <begin position="257"/>
        <end position="262"/>
    </location>
</feature>
<feature type="turn" evidence="10">
    <location>
        <begin position="264"/>
        <end position="267"/>
    </location>
</feature>
<feature type="helix" evidence="10">
    <location>
        <begin position="268"/>
        <end position="271"/>
    </location>
</feature>
<feature type="helix" evidence="10">
    <location>
        <begin position="273"/>
        <end position="275"/>
    </location>
</feature>
<feature type="helix" evidence="10">
    <location>
        <begin position="295"/>
        <end position="306"/>
    </location>
</feature>
<feature type="strand" evidence="10">
    <location>
        <begin position="307"/>
        <end position="310"/>
    </location>
</feature>
<feature type="strand" evidence="10">
    <location>
        <begin position="317"/>
        <end position="323"/>
    </location>
</feature>
<feature type="strand" evidence="10">
    <location>
        <begin position="330"/>
        <end position="337"/>
    </location>
</feature>
<feature type="strand" evidence="10">
    <location>
        <begin position="339"/>
        <end position="344"/>
    </location>
</feature>
<feature type="turn" evidence="12">
    <location>
        <begin position="353"/>
        <end position="355"/>
    </location>
</feature>
<feature type="strand" evidence="10">
    <location>
        <begin position="357"/>
        <end position="361"/>
    </location>
</feature>
<feature type="helix" evidence="10">
    <location>
        <begin position="362"/>
        <end position="364"/>
    </location>
</feature>
<feature type="strand" evidence="10">
    <location>
        <begin position="366"/>
        <end position="370"/>
    </location>
</feature>
<feature type="helix" evidence="10">
    <location>
        <begin position="373"/>
        <end position="377"/>
    </location>
</feature>
<feature type="strand" evidence="10">
    <location>
        <begin position="380"/>
        <end position="382"/>
    </location>
</feature>
<feature type="strand" evidence="10">
    <location>
        <begin position="384"/>
        <end position="388"/>
    </location>
</feature>
<feature type="strand" evidence="10">
    <location>
        <begin position="400"/>
        <end position="403"/>
    </location>
</feature>
<feature type="helix" evidence="10">
    <location>
        <begin position="407"/>
        <end position="422"/>
    </location>
</feature>
<feature type="helix" evidence="10">
    <location>
        <begin position="424"/>
        <end position="434"/>
    </location>
</feature>
<comment type="function">
    <text evidence="1">Appears to function in the signal transduction from Ras activation to actin cytoskeletal remodeling. Suppresses insulin-induced promoter activities through AP1 and SRE. Mediates Rap1-induced adhesion (By similarity).</text>
</comment>
<comment type="subunit">
    <text evidence="5 6">Interacts, through the N-terminal Pro-rich region, with the WW domain of APBB1. Interacts with RAP1A, PFN1, VASP and ENAH.</text>
</comment>
<comment type="interaction">
    <interactant intactId="EBI-7450496">
        <id>Q8R5A3</id>
    </interactant>
    <interactant intactId="EBI-1039593">
        <id>P26039</id>
        <label>Tln1</label>
    </interactant>
    <organismsDiffer>false</organismsDiffer>
    <experiments>8</experiments>
</comment>
<comment type="subcellular location">
    <subcellularLocation>
        <location evidence="5">Cell membrane</location>
        <topology evidence="5">Peripheral membrane protein</topology>
    </subcellularLocation>
    <subcellularLocation>
        <location evidence="5">Cell projection</location>
        <location evidence="5">Lamellipodium</location>
    </subcellularLocation>
    <subcellularLocation>
        <location evidence="5">Cell junction</location>
        <location evidence="5">Focal adhesion</location>
    </subcellularLocation>
    <subcellularLocation>
        <location evidence="5">Cytoplasm</location>
        <location evidence="5">Cytoskeleton</location>
    </subcellularLocation>
    <text>Colocalizes with ENA/VASP proteins at lamellipodia tips and focal adhesions, and F-actin at the leading edge. At the membrane surface, associates, via the PH domain, preferentially with the inositol phosphates, PtdIns(5)P and PtdIns(3)P. This binding appears to be necessary for the efficient interaction of the RA domain to Ras-GTPases.</text>
</comment>
<comment type="tissue specificity">
    <text evidence="5 6">Ubiquitously expressed with high expression in the hematopoietic system.</text>
</comment>
<comment type="similarity">
    <text evidence="7">Belongs to the MRL family.</text>
</comment>
<comment type="sequence caution" evidence="7">
    <conflict type="frameshift">
        <sequence resource="EMBL-CDS" id="AAB94880"/>
    </conflict>
</comment>
<organism>
    <name type="scientific">Mus musculus</name>
    <name type="common">Mouse</name>
    <dbReference type="NCBI Taxonomy" id="10090"/>
    <lineage>
        <taxon>Eukaryota</taxon>
        <taxon>Metazoa</taxon>
        <taxon>Chordata</taxon>
        <taxon>Craniata</taxon>
        <taxon>Vertebrata</taxon>
        <taxon>Euteleostomi</taxon>
        <taxon>Mammalia</taxon>
        <taxon>Eutheria</taxon>
        <taxon>Euarchontoglires</taxon>
        <taxon>Glires</taxon>
        <taxon>Rodentia</taxon>
        <taxon>Myomorpha</taxon>
        <taxon>Muroidea</taxon>
        <taxon>Muridae</taxon>
        <taxon>Murinae</taxon>
        <taxon>Mus</taxon>
        <taxon>Mus</taxon>
    </lineage>
</organism>
<name>AB1IP_MOUSE</name>